<sequence length="252" mass="29341">MEDFVRQCFNPMIVELAEKAMKEYGEDPKIETNKFAAICTHLEVCFMYSDFHFIDERGDSIIVEVGDPNALLKHRFEIIEGRDRNMAWTVVNSICNTTGVEKPKFLPDLYDYKENRFVEIGVTRREIHIYYLEKANKIKSEKTHIHIFSFTGEEMATKADYTLDEESRARIKTRLFTIRQEMASRGLWDSFVSPREAKRQLKKDLKLQEPCAGSPTKVSHRTSPALKTLEPMWMDSNRTAALRASFLKCPKK</sequence>
<evidence type="ECO:0000250" key="1">
    <source>
        <dbReference type="UniProtKB" id="P0CK64"/>
    </source>
</evidence>
<evidence type="ECO:0000250" key="2">
    <source>
        <dbReference type="UniProtKB" id="P0CK68"/>
    </source>
</evidence>
<evidence type="ECO:0000250" key="3">
    <source>
        <dbReference type="UniProtKB" id="P0DJW8"/>
    </source>
</evidence>
<evidence type="ECO:0000250" key="4">
    <source>
        <dbReference type="UniProtKB" id="P0DXO5"/>
    </source>
</evidence>
<evidence type="ECO:0000305" key="5"/>
<dbReference type="EMBL" id="CY015078">
    <property type="status" value="NOT_ANNOTATED_CDS"/>
    <property type="molecule type" value="Other_RNA"/>
</dbReference>
<dbReference type="SMR" id="P0CK75"/>
<dbReference type="Proteomes" id="UP000008584">
    <property type="component" value="Genome"/>
</dbReference>
<dbReference type="GO" id="GO:0003723">
    <property type="term" value="F:RNA binding"/>
    <property type="evidence" value="ECO:0007669"/>
    <property type="project" value="InterPro"/>
</dbReference>
<dbReference type="GO" id="GO:0039694">
    <property type="term" value="P:viral RNA genome replication"/>
    <property type="evidence" value="ECO:0007669"/>
    <property type="project" value="InterPro"/>
</dbReference>
<dbReference type="GO" id="GO:0075523">
    <property type="term" value="P:viral translational frameshifting"/>
    <property type="evidence" value="ECO:0007669"/>
    <property type="project" value="UniProtKB-KW"/>
</dbReference>
<dbReference type="FunFam" id="3.40.91.90:FF:000001">
    <property type="entry name" value="Polymerase acidic protein"/>
    <property type="match status" value="1"/>
</dbReference>
<dbReference type="Gene3D" id="3.40.91.90">
    <property type="entry name" value="Influenza RNA-dependent RNA polymerase subunit PA, endonuclease domain"/>
    <property type="match status" value="1"/>
</dbReference>
<dbReference type="InterPro" id="IPR001009">
    <property type="entry name" value="PA/PA-X"/>
</dbReference>
<dbReference type="InterPro" id="IPR038372">
    <property type="entry name" value="PA/PA-X_sf"/>
</dbReference>
<dbReference type="Pfam" id="PF00603">
    <property type="entry name" value="Flu_PA"/>
    <property type="match status" value="1"/>
</dbReference>
<name>PAX_I83A5</name>
<reference key="1">
    <citation type="journal article" date="2006" name="Science">
        <title>Large-scale sequence analysis of avian influenza isolates.</title>
        <authorList>
            <person name="Obenauer J.C."/>
            <person name="Denson J."/>
            <person name="Mehta P.K."/>
            <person name="Su X."/>
            <person name="Mukatira S."/>
            <person name="Finkelstein D.B."/>
            <person name="Xu X."/>
            <person name="Wang J."/>
            <person name="Ma J."/>
            <person name="Fan Y."/>
            <person name="Rakestraw K.M."/>
            <person name="Webster R.G."/>
            <person name="Hoffmann E."/>
            <person name="Krauss S."/>
            <person name="Zheng J."/>
            <person name="Zhang Z."/>
            <person name="Naeve C.W."/>
        </authorList>
    </citation>
    <scope>NUCLEOTIDE SEQUENCE [GENOMIC RNA]</scope>
</reference>
<comment type="function">
    <text evidence="1 4">Plays a major role in the shutoff of the host protein expression by cleaving mRNAs probably via an endonuclease activity. This host shutoff allows the virus to escape from the host antiviral response (By similarity). Hijacks host RNA splicing machinery to selectively target host RNAs containing introns for destruction. This may explain the preferential degradation of RNAs that have undergone co- or post-transcriptional processing (By similarity).</text>
</comment>
<comment type="subcellular location">
    <subcellularLocation>
        <location evidence="4">Host cytoplasm</location>
    </subcellularLocation>
    <subcellularLocation>
        <location evidence="4">Host nucleus</location>
    </subcellularLocation>
</comment>
<comment type="alternative products">
    <event type="ribosomal frameshifting"/>
    <isoform>
        <id>P0CK75-1</id>
        <name>PA-X</name>
        <sequence type="displayed"/>
    </isoform>
    <isoform>
        <id>Q0A2I0-1</id>
        <name>PA</name>
        <sequence type="external"/>
    </isoform>
</comment>
<comment type="domain">
    <text evidence="1 4">The probable endonuclease active site in the N-terminus and the basic amino acid cluster in the C-terminus are important for the shutoff activity. The C-terminus acts as a nuclear localization signal (By similarity). The C-terminus is recruited to host protein complexes involved in nuclear Pol II RNA processing (By similarity).</text>
</comment>
<comment type="similarity">
    <text evidence="5">Belongs to the influenza viruses PA-X family.</text>
</comment>
<proteinExistence type="inferred from homology"/>
<feature type="chain" id="PRO_0000419358" description="Protein PA-X">
    <location>
        <begin position="1"/>
        <end position="252"/>
    </location>
</feature>
<feature type="active site" evidence="2">
    <location>
        <position position="80"/>
    </location>
</feature>
<feature type="active site" evidence="2">
    <location>
        <position position="108"/>
    </location>
</feature>
<feature type="site" description="Important for efficient shutoff activity and nuclear localization" evidence="4">
    <location>
        <position position="195"/>
    </location>
</feature>
<feature type="site" description="Important for efficient shutoff activity and nuclear localization" evidence="4">
    <location>
        <position position="198"/>
    </location>
</feature>
<feature type="site" description="Important for efficient shutoff activity and nuclear localization" evidence="4">
    <location>
        <position position="199"/>
    </location>
</feature>
<feature type="site" description="Important for efficient shutoff activity" evidence="3">
    <location>
        <position position="202"/>
    </location>
</feature>
<feature type="site" description="Important for efficient shutoff activity" evidence="3">
    <location>
        <position position="203"/>
    </location>
</feature>
<feature type="site" description="Important for efficient shutoff activity" evidence="3">
    <location>
        <position position="206"/>
    </location>
</feature>
<organism>
    <name type="scientific">Influenza A virus (strain A/Chicken/Pennsylvania/1/1983 H5N2)</name>
    <dbReference type="NCBI Taxonomy" id="385586"/>
    <lineage>
        <taxon>Viruses</taxon>
        <taxon>Riboviria</taxon>
        <taxon>Orthornavirae</taxon>
        <taxon>Negarnaviricota</taxon>
        <taxon>Polyploviricotina</taxon>
        <taxon>Insthoviricetes</taxon>
        <taxon>Articulavirales</taxon>
        <taxon>Orthomyxoviridae</taxon>
        <taxon>Alphainfluenzavirus</taxon>
        <taxon>Alphainfluenzavirus influenzae</taxon>
        <taxon>Influenza A virus</taxon>
    </lineage>
</organism>
<organismHost>
    <name type="scientific">Aves</name>
    <dbReference type="NCBI Taxonomy" id="8782"/>
</organismHost>
<gene>
    <name type="primary">PA</name>
</gene>
<protein>
    <recommendedName>
        <fullName>Protein PA-X</fullName>
    </recommendedName>
</protein>
<accession>P0CK75</accession>
<keyword id="KW-1132">Decay of host mRNAs by virus</keyword>
<keyword id="KW-1262">Eukaryotic host gene expression shutoff by virus</keyword>
<keyword id="KW-1035">Host cytoplasm</keyword>
<keyword id="KW-1190">Host gene expression shutoff by virus</keyword>
<keyword id="KW-1192">Host mRNA suppression by virus</keyword>
<keyword id="KW-1048">Host nucleus</keyword>
<keyword id="KW-0945">Host-virus interaction</keyword>
<keyword id="KW-0688">Ribosomal frameshifting</keyword>